<sequence length="338" mass="39450">MIDKIIILYFYGDMRMNRKRTPRVDTLEAVANVLRAYRELFEGNLIKALYYVDKALELEPDFYLALFLKGLALSAKGEIKEAITTFEELLSYESKNPITWVFVGQLYGMSGNCDEALKCYNKALGIENRFLSAFLLKTICLEFLGEYDELLKCYNEVLTYTPNFVPMWVKKAEILRKLGRYEDALLCLNRALELKPHDKNALYLKGVLLKRMGKFREALECFKKLIDELNVKWIDAIRHAVSLMLALDDLKDAERYINIGLEIRKDDVALWYFKGELYERLGKLDEALKCYEKVIELQPHYIKALLSKARIYERQGNIEAAIEYYNKAVENIHKDHGE</sequence>
<protein>
    <recommendedName>
        <fullName>TPR repeat-containing protein MJ0941</fullName>
    </recommendedName>
</protein>
<reference key="1">
    <citation type="journal article" date="1996" name="Science">
        <title>Complete genome sequence of the methanogenic archaeon, Methanococcus jannaschii.</title>
        <authorList>
            <person name="Bult C.J."/>
            <person name="White O."/>
            <person name="Olsen G.J."/>
            <person name="Zhou L."/>
            <person name="Fleischmann R.D."/>
            <person name="Sutton G.G."/>
            <person name="Blake J.A."/>
            <person name="FitzGerald L.M."/>
            <person name="Clayton R.A."/>
            <person name="Gocayne J.D."/>
            <person name="Kerlavage A.R."/>
            <person name="Dougherty B.A."/>
            <person name="Tomb J.-F."/>
            <person name="Adams M.D."/>
            <person name="Reich C.I."/>
            <person name="Overbeek R."/>
            <person name="Kirkness E.F."/>
            <person name="Weinstock K.G."/>
            <person name="Merrick J.M."/>
            <person name="Glodek A."/>
            <person name="Scott J.L."/>
            <person name="Geoghagen N.S.M."/>
            <person name="Weidman J.F."/>
            <person name="Fuhrmann J.L."/>
            <person name="Nguyen D."/>
            <person name="Utterback T.R."/>
            <person name="Kelley J.M."/>
            <person name="Peterson J.D."/>
            <person name="Sadow P.W."/>
            <person name="Hanna M.C."/>
            <person name="Cotton M.D."/>
            <person name="Roberts K.M."/>
            <person name="Hurst M.A."/>
            <person name="Kaine B.P."/>
            <person name="Borodovsky M."/>
            <person name="Klenk H.-P."/>
            <person name="Fraser C.M."/>
            <person name="Smith H.O."/>
            <person name="Woese C.R."/>
            <person name="Venter J.C."/>
        </authorList>
    </citation>
    <scope>NUCLEOTIDE SEQUENCE [LARGE SCALE GENOMIC DNA]</scope>
    <source>
        <strain>ATCC 43067 / DSM 2661 / JAL-1 / JCM 10045 / NBRC 100440</strain>
    </source>
</reference>
<feature type="chain" id="PRO_0000106459" description="TPR repeat-containing protein MJ0941">
    <location>
        <begin position="1"/>
        <end position="338"/>
    </location>
</feature>
<feature type="repeat" description="TPR 1">
    <location>
        <begin position="27"/>
        <end position="62"/>
    </location>
</feature>
<feature type="repeat" description="TPR 2">
    <location>
        <begin position="63"/>
        <end position="96"/>
    </location>
</feature>
<feature type="repeat" description="TPR 3">
    <location>
        <begin position="97"/>
        <end position="130"/>
    </location>
</feature>
<feature type="repeat" description="TPR 4">
    <location>
        <begin position="131"/>
        <end position="164"/>
    </location>
</feature>
<feature type="repeat" description="TPR 5">
    <location>
        <begin position="165"/>
        <end position="198"/>
    </location>
</feature>
<feature type="repeat" description="TPR 6">
    <location>
        <begin position="199"/>
        <end position="232"/>
    </location>
</feature>
<feature type="repeat" description="TPR 7">
    <location>
        <begin position="268"/>
        <end position="301"/>
    </location>
</feature>
<feature type="repeat" description="TPR 8">
    <location>
        <begin position="302"/>
        <end position="335"/>
    </location>
</feature>
<keyword id="KW-1185">Reference proteome</keyword>
<keyword id="KW-0677">Repeat</keyword>
<keyword id="KW-0802">TPR repeat</keyword>
<name>Y941_METJA</name>
<gene>
    <name type="ordered locus">MJ0941</name>
</gene>
<proteinExistence type="predicted"/>
<dbReference type="EMBL" id="L77117">
    <property type="protein sequence ID" value="AAB98947.1"/>
    <property type="molecule type" value="Genomic_DNA"/>
</dbReference>
<dbReference type="PIR" id="E64417">
    <property type="entry name" value="E64417"/>
</dbReference>
<dbReference type="SMR" id="Q57711"/>
<dbReference type="STRING" id="243232.MJ_0941"/>
<dbReference type="PaxDb" id="243232-MJ_0941"/>
<dbReference type="EnsemblBacteria" id="AAB98947">
    <property type="protein sequence ID" value="AAB98947"/>
    <property type="gene ID" value="MJ_0941"/>
</dbReference>
<dbReference type="KEGG" id="mja:MJ_0941"/>
<dbReference type="eggNOG" id="arCOG03038">
    <property type="taxonomic scope" value="Archaea"/>
</dbReference>
<dbReference type="HOGENOM" id="CLU_003728_2_5_2"/>
<dbReference type="InParanoid" id="Q57711"/>
<dbReference type="PhylomeDB" id="Q57711"/>
<dbReference type="Proteomes" id="UP000000805">
    <property type="component" value="Chromosome"/>
</dbReference>
<dbReference type="Gene3D" id="1.25.40.10">
    <property type="entry name" value="Tetratricopeptide repeat domain"/>
    <property type="match status" value="3"/>
</dbReference>
<dbReference type="InterPro" id="IPR011990">
    <property type="entry name" value="TPR-like_helical_dom_sf"/>
</dbReference>
<dbReference type="InterPro" id="IPR019734">
    <property type="entry name" value="TPR_rpt"/>
</dbReference>
<dbReference type="InterPro" id="IPR051685">
    <property type="entry name" value="Ycf3/AcsC/BcsC/TPR_MFPF"/>
</dbReference>
<dbReference type="PANTHER" id="PTHR44943">
    <property type="entry name" value="CELLULOSE SYNTHASE OPERON PROTEIN C"/>
    <property type="match status" value="1"/>
</dbReference>
<dbReference type="PANTHER" id="PTHR44943:SF8">
    <property type="entry name" value="TPR REPEAT-CONTAINING PROTEIN MJ0263"/>
    <property type="match status" value="1"/>
</dbReference>
<dbReference type="Pfam" id="PF13414">
    <property type="entry name" value="TPR_11"/>
    <property type="match status" value="1"/>
</dbReference>
<dbReference type="Pfam" id="PF13424">
    <property type="entry name" value="TPR_12"/>
    <property type="match status" value="1"/>
</dbReference>
<dbReference type="Pfam" id="PF13432">
    <property type="entry name" value="TPR_16"/>
    <property type="match status" value="1"/>
</dbReference>
<dbReference type="Pfam" id="PF13181">
    <property type="entry name" value="TPR_8"/>
    <property type="match status" value="1"/>
</dbReference>
<dbReference type="SMART" id="SM00028">
    <property type="entry name" value="TPR"/>
    <property type="match status" value="8"/>
</dbReference>
<dbReference type="SUPFAM" id="SSF48452">
    <property type="entry name" value="TPR-like"/>
    <property type="match status" value="1"/>
</dbReference>
<dbReference type="PROSITE" id="PS50005">
    <property type="entry name" value="TPR"/>
    <property type="match status" value="8"/>
</dbReference>
<dbReference type="PROSITE" id="PS50293">
    <property type="entry name" value="TPR_REGION"/>
    <property type="match status" value="1"/>
</dbReference>
<accession>Q57711</accession>
<organism>
    <name type="scientific">Methanocaldococcus jannaschii (strain ATCC 43067 / DSM 2661 / JAL-1 / JCM 10045 / NBRC 100440)</name>
    <name type="common">Methanococcus jannaschii</name>
    <dbReference type="NCBI Taxonomy" id="243232"/>
    <lineage>
        <taxon>Archaea</taxon>
        <taxon>Methanobacteriati</taxon>
        <taxon>Methanobacteriota</taxon>
        <taxon>Methanomada group</taxon>
        <taxon>Methanococci</taxon>
        <taxon>Methanococcales</taxon>
        <taxon>Methanocaldococcaceae</taxon>
        <taxon>Methanocaldococcus</taxon>
    </lineage>
</organism>